<accession>P48732</accession>
<accession>Q66GQ4</accession>
<name>DET1_ARATH</name>
<comment type="function">
    <text evidence="5 7 8">Component of light signal transduction machinery. Involved in repression of photomorphogenesis in darkness by participating in the CDD complex, a complex probably required to regulate the activity of ubiquitin conjugating enzymes (E2s). Involved in repression of deetiolation in the developing seedling. Repression of photomorphogenesis is probably mediated by ubiquitination and subsequent degradation of photomorphogenesis-promoting factors such as HY5, HYH and LAF1. Involved in the repression of blue light responsive promoter in chloroplasts. May be required to stabilize the CDD complex. Its association with histone tail suggests a role in remodeling of chromatin (PubMed:15342494, PubMed:9681024). Required for the regulation of histone H2B monoubiquitination (H2Bub) over most genes by controlling the stability of the deubiquitination module (DUB module) (PubMed:30192741).</text>
</comment>
<comment type="subunit">
    <text evidence="3 4 5 6">Component of the CDD complex, at least composed of COP10, DET1 and DDB1A (PubMed:15342494, PubMed:24563205). Interacts with DDB1A (PubMed:12225661). Interacts with non-acetylated N-terminal tail of histone H2B in a nucleosome context (PubMed:12225670).</text>
</comment>
<comment type="subcellular location">
    <subcellularLocation>
        <location evidence="7">Nucleus</location>
        <location evidence="7">Nucleoplasm</location>
    </subcellularLocation>
    <text evidence="7">Displays a rather patchy distribution forming a punctuated pattern in the euchromatin (PubMed:30192741). Does not localize in the heterochromatic chromocenters or nucleolus (PubMed:30192741).</text>
</comment>
<comment type="similarity">
    <text evidence="9">Belongs to the DET1 family.</text>
</comment>
<comment type="sequence caution" evidence="9">
    <conflict type="erroneous gene model prediction">
        <sequence resource="EMBL-CDS" id="AAB59299"/>
    </conflict>
</comment>
<comment type="sequence caution" evidence="9">
    <conflict type="erroneous gene model prediction">
        <sequence resource="EMBL-CDS" id="AAC62814"/>
    </conflict>
</comment>
<comment type="sequence caution" evidence="9">
    <conflict type="erroneous gene model prediction">
        <sequence resource="EMBL-CDS" id="CAB39770"/>
    </conflict>
</comment>
<comment type="sequence caution" evidence="9">
    <conflict type="erroneous gene model prediction">
        <sequence resource="EMBL-CDS" id="CAB78141"/>
    </conflict>
</comment>
<gene>
    <name type="primary">DET1</name>
    <name type="ordered locus">At4g10180</name>
    <name type="ORF">F28M11.100</name>
    <name type="ORF">T9A4.13</name>
</gene>
<dbReference type="EMBL" id="L33695">
    <property type="protein sequence ID" value="AAB59299.1"/>
    <property type="status" value="ALT_SEQ"/>
    <property type="molecule type" value="Genomic_DNA"/>
</dbReference>
<dbReference type="EMBL" id="AF096373">
    <property type="protein sequence ID" value="AAC62814.1"/>
    <property type="status" value="ALT_SEQ"/>
    <property type="molecule type" value="Genomic_DNA"/>
</dbReference>
<dbReference type="EMBL" id="AL049487">
    <property type="protein sequence ID" value="CAB39770.1"/>
    <property type="status" value="ALT_SEQ"/>
    <property type="molecule type" value="Genomic_DNA"/>
</dbReference>
<dbReference type="EMBL" id="AL161516">
    <property type="protein sequence ID" value="CAB78141.1"/>
    <property type="status" value="ALT_SEQ"/>
    <property type="molecule type" value="Genomic_DNA"/>
</dbReference>
<dbReference type="EMBL" id="CP002687">
    <property type="protein sequence ID" value="AEE82852.1"/>
    <property type="molecule type" value="Genomic_DNA"/>
</dbReference>
<dbReference type="EMBL" id="BT015348">
    <property type="protein sequence ID" value="AAU05471.1"/>
    <property type="molecule type" value="mRNA"/>
</dbReference>
<dbReference type="EMBL" id="BT020454">
    <property type="protein sequence ID" value="AAW30032.1"/>
    <property type="molecule type" value="mRNA"/>
</dbReference>
<dbReference type="PIR" id="A54841">
    <property type="entry name" value="A54841"/>
</dbReference>
<dbReference type="RefSeq" id="NP_192756.2">
    <property type="nucleotide sequence ID" value="NM_117086.4"/>
</dbReference>
<dbReference type="BioGRID" id="11908">
    <property type="interactions" value="24"/>
</dbReference>
<dbReference type="FunCoup" id="P48732">
    <property type="interactions" value="2673"/>
</dbReference>
<dbReference type="IntAct" id="P48732">
    <property type="interactions" value="2"/>
</dbReference>
<dbReference type="STRING" id="3702.P48732"/>
<dbReference type="iPTMnet" id="P48732"/>
<dbReference type="PaxDb" id="3702-AT4G10180.1"/>
<dbReference type="ProteomicsDB" id="224206"/>
<dbReference type="EnsemblPlants" id="AT4G10180.1">
    <property type="protein sequence ID" value="AT4G10180.1"/>
    <property type="gene ID" value="AT4G10180"/>
</dbReference>
<dbReference type="GeneID" id="826609"/>
<dbReference type="Gramene" id="AT4G10180.1">
    <property type="protein sequence ID" value="AT4G10180.1"/>
    <property type="gene ID" value="AT4G10180"/>
</dbReference>
<dbReference type="KEGG" id="ath:AT4G10180"/>
<dbReference type="Araport" id="AT4G10180"/>
<dbReference type="TAIR" id="AT4G10180">
    <property type="gene designation" value="DET1"/>
</dbReference>
<dbReference type="eggNOG" id="KOG2558">
    <property type="taxonomic scope" value="Eukaryota"/>
</dbReference>
<dbReference type="HOGENOM" id="CLU_036725_1_0_1"/>
<dbReference type="InParanoid" id="P48732"/>
<dbReference type="OMA" id="ITPCLTI"/>
<dbReference type="PhylomeDB" id="P48732"/>
<dbReference type="PRO" id="PR:P48732"/>
<dbReference type="Proteomes" id="UP000006548">
    <property type="component" value="Chromosome 4"/>
</dbReference>
<dbReference type="ExpressionAtlas" id="P48732">
    <property type="expression patterns" value="baseline and differential"/>
</dbReference>
<dbReference type="GO" id="GO:0005654">
    <property type="term" value="C:nucleoplasm"/>
    <property type="evidence" value="ECO:0007669"/>
    <property type="project" value="UniProtKB-SubCell"/>
</dbReference>
<dbReference type="GO" id="GO:0005634">
    <property type="term" value="C:nucleus"/>
    <property type="evidence" value="ECO:0000314"/>
    <property type="project" value="TAIR"/>
</dbReference>
<dbReference type="GO" id="GO:0005975">
    <property type="term" value="P:carbohydrate metabolic process"/>
    <property type="evidence" value="ECO:0007669"/>
    <property type="project" value="InterPro"/>
</dbReference>
<dbReference type="GO" id="GO:0006281">
    <property type="term" value="P:DNA repair"/>
    <property type="evidence" value="ECO:0000315"/>
    <property type="project" value="TAIR"/>
</dbReference>
<dbReference type="GO" id="GO:0009585">
    <property type="term" value="P:red, far-red light phototransduction"/>
    <property type="evidence" value="ECO:0007669"/>
    <property type="project" value="UniProtKB-KW"/>
</dbReference>
<dbReference type="InterPro" id="IPR008928">
    <property type="entry name" value="6-hairpin_glycosidase_sf"/>
</dbReference>
<dbReference type="InterPro" id="IPR019138">
    <property type="entry name" value="De-etiolated_protein_1_Det1"/>
</dbReference>
<dbReference type="PANTHER" id="PTHR13374:SF3">
    <property type="entry name" value="DET1 HOMOLOG"/>
    <property type="match status" value="1"/>
</dbReference>
<dbReference type="PANTHER" id="PTHR13374">
    <property type="entry name" value="DET1 HOMOLOG DE-ETIOLATED-1 HOMOLOG"/>
    <property type="match status" value="1"/>
</dbReference>
<dbReference type="Pfam" id="PF09737">
    <property type="entry name" value="Det1"/>
    <property type="match status" value="1"/>
</dbReference>
<dbReference type="SUPFAM" id="SSF48208">
    <property type="entry name" value="Six-hairpin glycosidases"/>
    <property type="match status" value="1"/>
</dbReference>
<sequence length="543" mass="62492">MFTSGNVTARVFERQIRTPPPGASVNRARHFYENLVPSYTLYDVESPDHCFRKFTEDGLFLISFSRNHQELIVYRPSWLTYSTTDDSTTTLPPLPRRASKFDSFFTQLYSVNLASSNELICKDFFLYHQTRRFGLFATSTAQIHDSSSPSNDAVPGVPSIDKITFVLLRLDDGVVLDERVFLHDFVNLAHNMGVFLYDDLLAILSLRYQRIHLLQIRDSGHLVDARAIGYFCREDDELFLNSSSQAMMSQDKSKQQSLSGSKEDDTGENGLRHSLSQPSGSNSFLSGVKQRLLSFIFREIWNEESDNVMRVQSLKKKFYFHFQDYVDLIIWKVQFLDRQHLLIKFGSVDGGVTRSADHHPAFFAVYNMETTDIVAFYQNSAEDLYQLFEQFSDHFTVSSSTPFMNFVTSHSNNVYALEQLKYTKNKSNSFSQFVKKMLLSLPFSCQSQSPSPYFDQSLFRFDEKLISAADRHRQSSDNPIKFISRRQPQTLKFKIKPGPECGTADGRSKKICSFLFHPHLPLAISIQQTLFMPPSVVNIHFRR</sequence>
<proteinExistence type="evidence at protein level"/>
<keyword id="KW-0539">Nucleus</keyword>
<keyword id="KW-0607">Phytochrome signaling pathway</keyword>
<keyword id="KW-1185">Reference proteome</keyword>
<keyword id="KW-0833">Ubl conjugation pathway</keyword>
<feature type="chain" id="PRO_0000129028" description="Light-mediated development protein DET1">
    <location>
        <begin position="1"/>
        <end position="543"/>
    </location>
</feature>
<feature type="region of interest" description="Disordered" evidence="2">
    <location>
        <begin position="246"/>
        <end position="283"/>
    </location>
</feature>
<feature type="short sequence motif" description="Nuclear localization signal" evidence="1">
    <location>
        <begin position="421"/>
        <end position="436"/>
    </location>
</feature>
<feature type="short sequence motif" description="Nuclear localization signal" evidence="1">
    <location>
        <begin position="492"/>
        <end position="510"/>
    </location>
</feature>
<feature type="compositionally biased region" description="Polar residues" evidence="2">
    <location>
        <begin position="246"/>
        <end position="260"/>
    </location>
</feature>
<feature type="compositionally biased region" description="Polar residues" evidence="2">
    <location>
        <begin position="274"/>
        <end position="283"/>
    </location>
</feature>
<organism>
    <name type="scientific">Arabidopsis thaliana</name>
    <name type="common">Mouse-ear cress</name>
    <dbReference type="NCBI Taxonomy" id="3702"/>
    <lineage>
        <taxon>Eukaryota</taxon>
        <taxon>Viridiplantae</taxon>
        <taxon>Streptophyta</taxon>
        <taxon>Embryophyta</taxon>
        <taxon>Tracheophyta</taxon>
        <taxon>Spermatophyta</taxon>
        <taxon>Magnoliopsida</taxon>
        <taxon>eudicotyledons</taxon>
        <taxon>Gunneridae</taxon>
        <taxon>Pentapetalae</taxon>
        <taxon>rosids</taxon>
        <taxon>malvids</taxon>
        <taxon>Brassicales</taxon>
        <taxon>Brassicaceae</taxon>
        <taxon>Camelineae</taxon>
        <taxon>Arabidopsis</taxon>
    </lineage>
</organism>
<evidence type="ECO:0000255" key="1"/>
<evidence type="ECO:0000256" key="2">
    <source>
        <dbReference type="SAM" id="MobiDB-lite"/>
    </source>
</evidence>
<evidence type="ECO:0000269" key="3">
    <source>
    </source>
</evidence>
<evidence type="ECO:0000269" key="4">
    <source>
    </source>
</evidence>
<evidence type="ECO:0000269" key="5">
    <source>
    </source>
</evidence>
<evidence type="ECO:0000269" key="6">
    <source>
    </source>
</evidence>
<evidence type="ECO:0000269" key="7">
    <source>
    </source>
</evidence>
<evidence type="ECO:0000269" key="8">
    <source>
    </source>
</evidence>
<evidence type="ECO:0000305" key="9"/>
<protein>
    <recommendedName>
        <fullName>Light-mediated development protein DET1</fullName>
    </recommendedName>
    <alternativeName>
        <fullName>Protein DEETIOLATED 1</fullName>
    </alternativeName>
</protein>
<reference key="1">
    <citation type="journal article" date="1994" name="Cell">
        <title>DET1, a negative regulator of light-mediated development and gene expression in Arabidopsis, encodes a novel nuclear-localized protein.</title>
        <authorList>
            <person name="Pepper A."/>
            <person name="Delaney T."/>
            <person name="Washburn T."/>
            <person name="Poole D."/>
            <person name="Chory J."/>
        </authorList>
    </citation>
    <scope>NUCLEOTIDE SEQUENCE [GENOMIC DNA]</scope>
    <source>
        <strain>cv. Columbia</strain>
    </source>
</reference>
<reference key="2">
    <citation type="submission" date="1998-10" db="EMBL/GenBank/DDBJ databases">
        <authorList>
            <person name="Zidanic M."/>
            <person name="McQuerry Y."/>
            <person name="Smith A."/>
        </authorList>
    </citation>
    <scope>NUCLEOTIDE SEQUENCE [GENOMIC DNA]</scope>
    <source>
        <strain>cv. Columbia</strain>
    </source>
</reference>
<reference key="3">
    <citation type="journal article" date="1999" name="Nature">
        <title>Sequence and analysis of chromosome 4 of the plant Arabidopsis thaliana.</title>
        <authorList>
            <person name="Mayer K.F.X."/>
            <person name="Schueller C."/>
            <person name="Wambutt R."/>
            <person name="Murphy G."/>
            <person name="Volckaert G."/>
            <person name="Pohl T."/>
            <person name="Duesterhoeft A."/>
            <person name="Stiekema W."/>
            <person name="Entian K.-D."/>
            <person name="Terryn N."/>
            <person name="Harris B."/>
            <person name="Ansorge W."/>
            <person name="Brandt P."/>
            <person name="Grivell L.A."/>
            <person name="Rieger M."/>
            <person name="Weichselgartner M."/>
            <person name="de Simone V."/>
            <person name="Obermaier B."/>
            <person name="Mache R."/>
            <person name="Mueller M."/>
            <person name="Kreis M."/>
            <person name="Delseny M."/>
            <person name="Puigdomenech P."/>
            <person name="Watson M."/>
            <person name="Schmidtheini T."/>
            <person name="Reichert B."/>
            <person name="Portetelle D."/>
            <person name="Perez-Alonso M."/>
            <person name="Boutry M."/>
            <person name="Bancroft I."/>
            <person name="Vos P."/>
            <person name="Hoheisel J."/>
            <person name="Zimmermann W."/>
            <person name="Wedler H."/>
            <person name="Ridley P."/>
            <person name="Langham S.-A."/>
            <person name="McCullagh B."/>
            <person name="Bilham L."/>
            <person name="Robben J."/>
            <person name="van der Schueren J."/>
            <person name="Grymonprez B."/>
            <person name="Chuang Y.-J."/>
            <person name="Vandenbussche F."/>
            <person name="Braeken M."/>
            <person name="Weltjens I."/>
            <person name="Voet M."/>
            <person name="Bastiaens I."/>
            <person name="Aert R."/>
            <person name="Defoor E."/>
            <person name="Weitzenegger T."/>
            <person name="Bothe G."/>
            <person name="Ramsperger U."/>
            <person name="Hilbert H."/>
            <person name="Braun M."/>
            <person name="Holzer E."/>
            <person name="Brandt A."/>
            <person name="Peters S."/>
            <person name="van Staveren M."/>
            <person name="Dirkse W."/>
            <person name="Mooijman P."/>
            <person name="Klein Lankhorst R."/>
            <person name="Rose M."/>
            <person name="Hauf J."/>
            <person name="Koetter P."/>
            <person name="Berneiser S."/>
            <person name="Hempel S."/>
            <person name="Feldpausch M."/>
            <person name="Lamberth S."/>
            <person name="Van den Daele H."/>
            <person name="De Keyser A."/>
            <person name="Buysshaert C."/>
            <person name="Gielen J."/>
            <person name="Villarroel R."/>
            <person name="De Clercq R."/>
            <person name="van Montagu M."/>
            <person name="Rogers J."/>
            <person name="Cronin A."/>
            <person name="Quail M.A."/>
            <person name="Bray-Allen S."/>
            <person name="Clark L."/>
            <person name="Doggett J."/>
            <person name="Hall S."/>
            <person name="Kay M."/>
            <person name="Lennard N."/>
            <person name="McLay K."/>
            <person name="Mayes R."/>
            <person name="Pettett A."/>
            <person name="Rajandream M.A."/>
            <person name="Lyne M."/>
            <person name="Benes V."/>
            <person name="Rechmann S."/>
            <person name="Borkova D."/>
            <person name="Bloecker H."/>
            <person name="Scharfe M."/>
            <person name="Grimm M."/>
            <person name="Loehnert T.-H."/>
            <person name="Dose S."/>
            <person name="de Haan M."/>
            <person name="Maarse A.C."/>
            <person name="Schaefer M."/>
            <person name="Mueller-Auer S."/>
            <person name="Gabel C."/>
            <person name="Fuchs M."/>
            <person name="Fartmann B."/>
            <person name="Granderath K."/>
            <person name="Dauner D."/>
            <person name="Herzl A."/>
            <person name="Neumann S."/>
            <person name="Argiriou A."/>
            <person name="Vitale D."/>
            <person name="Liguori R."/>
            <person name="Piravandi E."/>
            <person name="Massenet O."/>
            <person name="Quigley F."/>
            <person name="Clabauld G."/>
            <person name="Muendlein A."/>
            <person name="Felber R."/>
            <person name="Schnabl S."/>
            <person name="Hiller R."/>
            <person name="Schmidt W."/>
            <person name="Lecharny A."/>
            <person name="Aubourg S."/>
            <person name="Chefdor F."/>
            <person name="Cooke R."/>
            <person name="Berger C."/>
            <person name="Monfort A."/>
            <person name="Casacuberta E."/>
            <person name="Gibbons T."/>
            <person name="Weber N."/>
            <person name="Vandenbol M."/>
            <person name="Bargues M."/>
            <person name="Terol J."/>
            <person name="Torres A."/>
            <person name="Perez-Perez A."/>
            <person name="Purnelle B."/>
            <person name="Bent E."/>
            <person name="Johnson S."/>
            <person name="Tacon D."/>
            <person name="Jesse T."/>
            <person name="Heijnen L."/>
            <person name="Schwarz S."/>
            <person name="Scholler P."/>
            <person name="Heber S."/>
            <person name="Francs P."/>
            <person name="Bielke C."/>
            <person name="Frishman D."/>
            <person name="Haase D."/>
            <person name="Lemcke K."/>
            <person name="Mewes H.-W."/>
            <person name="Stocker S."/>
            <person name="Zaccaria P."/>
            <person name="Bevan M."/>
            <person name="Wilson R.K."/>
            <person name="de la Bastide M."/>
            <person name="Habermann K."/>
            <person name="Parnell L."/>
            <person name="Dedhia N."/>
            <person name="Gnoj L."/>
            <person name="Schutz K."/>
            <person name="Huang E."/>
            <person name="Spiegel L."/>
            <person name="Sekhon M."/>
            <person name="Murray J."/>
            <person name="Sheet P."/>
            <person name="Cordes M."/>
            <person name="Abu-Threideh J."/>
            <person name="Stoneking T."/>
            <person name="Kalicki J."/>
            <person name="Graves T."/>
            <person name="Harmon G."/>
            <person name="Edwards J."/>
            <person name="Latreille P."/>
            <person name="Courtney L."/>
            <person name="Cloud J."/>
            <person name="Abbott A."/>
            <person name="Scott K."/>
            <person name="Johnson D."/>
            <person name="Minx P."/>
            <person name="Bentley D."/>
            <person name="Fulton B."/>
            <person name="Miller N."/>
            <person name="Greco T."/>
            <person name="Kemp K."/>
            <person name="Kramer J."/>
            <person name="Fulton L."/>
            <person name="Mardis E."/>
            <person name="Dante M."/>
            <person name="Pepin K."/>
            <person name="Hillier L.W."/>
            <person name="Nelson J."/>
            <person name="Spieth J."/>
            <person name="Ryan E."/>
            <person name="Andrews S."/>
            <person name="Geisel C."/>
            <person name="Layman D."/>
            <person name="Du H."/>
            <person name="Ali J."/>
            <person name="Berghoff A."/>
            <person name="Jones K."/>
            <person name="Drone K."/>
            <person name="Cotton M."/>
            <person name="Joshu C."/>
            <person name="Antonoiu B."/>
            <person name="Zidanic M."/>
            <person name="Strong C."/>
            <person name="Sun H."/>
            <person name="Lamar B."/>
            <person name="Yordan C."/>
            <person name="Ma P."/>
            <person name="Zhong J."/>
            <person name="Preston R."/>
            <person name="Vil D."/>
            <person name="Shekher M."/>
            <person name="Matero A."/>
            <person name="Shah R."/>
            <person name="Swaby I.K."/>
            <person name="O'Shaughnessy A."/>
            <person name="Rodriguez M."/>
            <person name="Hoffman J."/>
            <person name="Till S."/>
            <person name="Granat S."/>
            <person name="Shohdy N."/>
            <person name="Hasegawa A."/>
            <person name="Hameed A."/>
            <person name="Lodhi M."/>
            <person name="Johnson A."/>
            <person name="Chen E."/>
            <person name="Marra M.A."/>
            <person name="Martienssen R."/>
            <person name="McCombie W.R."/>
        </authorList>
    </citation>
    <scope>NUCLEOTIDE SEQUENCE [LARGE SCALE GENOMIC DNA]</scope>
    <source>
        <strain>cv. Columbia</strain>
    </source>
</reference>
<reference key="4">
    <citation type="journal article" date="2017" name="Plant J.">
        <title>Araport11: a complete reannotation of the Arabidopsis thaliana reference genome.</title>
        <authorList>
            <person name="Cheng C.Y."/>
            <person name="Krishnakumar V."/>
            <person name="Chan A.P."/>
            <person name="Thibaud-Nissen F."/>
            <person name="Schobel S."/>
            <person name="Town C.D."/>
        </authorList>
    </citation>
    <scope>GENOME REANNOTATION</scope>
    <source>
        <strain>cv. Columbia</strain>
    </source>
</reference>
<reference key="5">
    <citation type="submission" date="2004-12" db="EMBL/GenBank/DDBJ databases">
        <title>Arabidopsis ORF clones.</title>
        <authorList>
            <person name="Shinn P."/>
            <person name="Chen H."/>
            <person name="Cheuk R.F."/>
            <person name="Kim C.J."/>
            <person name="Ecker J.R."/>
        </authorList>
    </citation>
    <scope>NUCLEOTIDE SEQUENCE [LARGE SCALE MRNA]</scope>
    <source>
        <strain>cv. Columbia</strain>
    </source>
</reference>
<reference key="6">
    <citation type="journal article" date="1998" name="Plant J.">
        <title>DET1 represses a chloroplast blue light-responsive promoter in a developmental and tissue-specific manner in Arabidopsis thaliana.</title>
        <authorList>
            <person name="Christopher D.A."/>
            <person name="Hoffer P.H."/>
        </authorList>
    </citation>
    <scope>FUNCTION</scope>
</reference>
<reference key="7">
    <citation type="journal article" date="2002" name="Curr. Biol.">
        <title>De-etiolated 1 and damaged DNA binding protein 1 interact to regulate Arabidopsis photomorphogenesis.</title>
        <authorList>
            <person name="Schroeder D.F."/>
            <person name="Gahrtz M."/>
            <person name="Maxwell B.B."/>
            <person name="Cook R.K."/>
            <person name="Kan J.M."/>
            <person name="Alonso J.M."/>
            <person name="Ecker J.R."/>
            <person name="Chory J."/>
        </authorList>
    </citation>
    <scope>INTERACTION WITH DDB1A</scope>
</reference>
<reference key="8">
    <citation type="journal article" date="2002" name="Curr. Biol.">
        <title>The photomorphogenesis regulator DET1 binds the amino-terminal tail of histone H2B in a nucleosome context.</title>
        <authorList>
            <person name="Benvenuto G."/>
            <person name="Formiggini F."/>
            <person name="Laflamme P."/>
            <person name="Malakhov M."/>
            <person name="Bowler C."/>
        </authorList>
    </citation>
    <scope>INTERACTION WITH HISTONE H2B</scope>
</reference>
<reference key="9">
    <citation type="journal article" date="2004" name="Genes Dev.">
        <title>Arabidopsis COP10 forms a complex with DDB1 and DET1 in vivo and enhances the activity of ubiquitin conjugating enzymes.</title>
        <authorList>
            <person name="Yanagawa Y."/>
            <person name="Sullivan J.A."/>
            <person name="Komatsu S."/>
            <person name="Gusmaroli G."/>
            <person name="Suzuki G."/>
            <person name="Yin J."/>
            <person name="Ishibashi T."/>
            <person name="Saijo Y."/>
            <person name="Rubio V."/>
            <person name="Kimura S."/>
            <person name="Wang J."/>
            <person name="Deng X.-W."/>
        </authorList>
    </citation>
    <scope>FUNCTION</scope>
    <scope>COMPONENT OF CDD COMPLEX WITH COP10 AND DDB1A</scope>
</reference>
<reference key="10">
    <citation type="journal article" date="2014" name="Plant Cell">
        <title>Targeted degradation of abscisic acid receptors is mediated by the ubiquitin ligase substrate adaptor DDA1 in Arabidopsis.</title>
        <authorList>
            <person name="Irigoyen M.L."/>
            <person name="Iniesto E."/>
            <person name="Rodriguez L."/>
            <person name="Puga M.I."/>
            <person name="Yanagawa Y."/>
            <person name="Pick E."/>
            <person name="Strickland E."/>
            <person name="Paz-Ares J."/>
            <person name="Wei N."/>
            <person name="De Jaeger G."/>
            <person name="Rodriguez P.L."/>
            <person name="Deng X.W."/>
            <person name="Rubio V."/>
        </authorList>
    </citation>
    <scope>IDENTIFICATION IN CDD COMPLEX WITH COP10 AND DDB1A</scope>
</reference>
<reference key="11">
    <citation type="journal article" date="2018" name="Elife">
        <title>DET1-mediated degradation of a SAGA-like deubiquitination module controls H2Bub homeostasis.</title>
        <authorList>
            <person name="Nassrallah A."/>
            <person name="Rougee M."/>
            <person name="Bourbousse C."/>
            <person name="Drevensek S."/>
            <person name="Fonseca S."/>
            <person name="Iniesto E."/>
            <person name="Ait-Mohamed O."/>
            <person name="Deton-Cabanillas A.F."/>
            <person name="Zabulon G."/>
            <person name="Ahmed I."/>
            <person name="Stroebel D."/>
            <person name="Masson V."/>
            <person name="Lombard B."/>
            <person name="Eeckhout D."/>
            <person name="Gevaert K."/>
            <person name="Loew D."/>
            <person name="Genovesio A."/>
            <person name="Breyton C."/>
            <person name="de Jaeger G."/>
            <person name="Bowler C."/>
            <person name="Rubio V."/>
            <person name="Barneche F."/>
        </authorList>
    </citation>
    <scope>FUNCTION</scope>
    <scope>SUBCELLULAR LOCATION</scope>
</reference>